<sequence>MAAPRISFSPSDILFGVLDRLFKDNATGKVLASR</sequence>
<reference key="1">
    <citation type="journal article" date="1987" name="J. Mol. Biol.">
        <title>Receptor-recognizing proteins of T-even type bacteriophages. Constant and hypervariable regions and an unusual case of evolution.</title>
        <authorList>
            <person name="Montag D."/>
            <person name="Riede I."/>
            <person name="Eschbach M.-L."/>
            <person name="Degen M."/>
            <person name="Henning U."/>
        </authorList>
    </citation>
    <scope>NUCLEOTIDE SEQUENCE [GENOMIC DNA]</scope>
</reference>
<name>VLYS_BPM1</name>
<protein>
    <recommendedName>
        <fullName>Lysis protein</fullName>
    </recommendedName>
</protein>
<organismHost>
    <name type="scientific">Selenomonas ruminantium</name>
    <dbReference type="NCBI Taxonomy" id="971"/>
</organismHost>
<dbReference type="EMBL" id="X05676">
    <property type="protein sequence ID" value="CAA29162.1"/>
    <property type="molecule type" value="Genomic_DNA"/>
</dbReference>
<dbReference type="PIR" id="PS0065">
    <property type="entry name" value="PS0065"/>
</dbReference>
<dbReference type="GO" id="GO:0044659">
    <property type="term" value="P:viral release from host cell by cytolysis"/>
    <property type="evidence" value="ECO:0007669"/>
    <property type="project" value="InterPro"/>
</dbReference>
<dbReference type="InterPro" id="IPR020982">
    <property type="entry name" value="Phage_T4_GpT_holin"/>
</dbReference>
<dbReference type="Pfam" id="PF11031">
    <property type="entry name" value="Phage_holin_T"/>
    <property type="match status" value="1"/>
</dbReference>
<keyword id="KW-0204">Cytolysis</keyword>
<keyword id="KW-0578">Host cell lysis by virus</keyword>
<keyword id="KW-1188">Viral release from host cell</keyword>
<feature type="chain" id="PRO_0000165068" description="Lysis protein">
    <location>
        <begin position="1"/>
        <end position="34" status="greater than"/>
    </location>
</feature>
<feature type="non-terminal residue">
    <location>
        <position position="34"/>
    </location>
</feature>
<proteinExistence type="predicted"/>
<accession>P08229</accession>
<organism>
    <name type="scientific">Enterobacteria phage M1</name>
    <name type="common">Bacteriophage M1</name>
    <dbReference type="NCBI Taxonomy" id="10676"/>
    <lineage>
        <taxon>Viruses</taxon>
        <taxon>Duplodnaviria</taxon>
        <taxon>Heunggongvirae</taxon>
        <taxon>Uroviricota</taxon>
        <taxon>Caudoviricetes</taxon>
        <taxon>Straboviridae</taxon>
        <taxon>Tevenvirinae</taxon>
        <taxon>Tequatrovirus</taxon>
    </lineage>
</organism>
<gene>
    <name type="primary">T</name>
</gene>